<proteinExistence type="inferred from homology"/>
<protein>
    <recommendedName>
        <fullName evidence="1">DNA-directed RNA polymerase subunit Rpo5</fullName>
        <ecNumber evidence="1">2.7.7.6</ecNumber>
    </recommendedName>
    <alternativeName>
        <fullName evidence="1">DNA-directed RNA polymerase subunit H</fullName>
    </alternativeName>
</protein>
<evidence type="ECO:0000255" key="1">
    <source>
        <dbReference type="HAMAP-Rule" id="MF_00025"/>
    </source>
</evidence>
<keyword id="KW-0963">Cytoplasm</keyword>
<keyword id="KW-0240">DNA-directed RNA polymerase</keyword>
<keyword id="KW-0548">Nucleotidyltransferase</keyword>
<keyword id="KW-0804">Transcription</keyword>
<keyword id="KW-0808">Transferase</keyword>
<name>RPO5_METBF</name>
<sequence length="78" mass="8809">MTKFSLLDHESVPKHEIMPEGELKSVLSKYSIEKEQLPKIKVHDPVCKEIGAVVGDVVKITRISQTAGEAEYYRLVIE</sequence>
<reference key="1">
    <citation type="journal article" date="2006" name="J. Bacteriol.">
        <title>The Methanosarcina barkeri genome: comparative analysis with Methanosarcina acetivorans and Methanosarcina mazei reveals extensive rearrangement within methanosarcinal genomes.</title>
        <authorList>
            <person name="Maeder D.L."/>
            <person name="Anderson I."/>
            <person name="Brettin T.S."/>
            <person name="Bruce D.C."/>
            <person name="Gilna P."/>
            <person name="Han C.S."/>
            <person name="Lapidus A."/>
            <person name="Metcalf W.W."/>
            <person name="Saunders E."/>
            <person name="Tapia R."/>
            <person name="Sowers K.R."/>
        </authorList>
    </citation>
    <scope>NUCLEOTIDE SEQUENCE [LARGE SCALE GENOMIC DNA]</scope>
    <source>
        <strain>Fusaro / DSM 804</strain>
    </source>
</reference>
<feature type="chain" id="PRO_1000002189" description="DNA-directed RNA polymerase subunit Rpo5">
    <location>
        <begin position="1"/>
        <end position="78"/>
    </location>
</feature>
<gene>
    <name evidence="1" type="primary">rpo5</name>
    <name evidence="1" type="synonym">rpoH</name>
    <name type="ordered locus">Mbar_A3695</name>
</gene>
<dbReference type="EC" id="2.7.7.6" evidence="1"/>
<dbReference type="EMBL" id="CP000099">
    <property type="protein sequence ID" value="AAZ72558.1"/>
    <property type="molecule type" value="Genomic_DNA"/>
</dbReference>
<dbReference type="SMR" id="Q464Y4"/>
<dbReference type="STRING" id="269797.Mbar_A3695"/>
<dbReference type="PaxDb" id="269797-Mbar_A3695"/>
<dbReference type="KEGG" id="mba:Mbar_A3695"/>
<dbReference type="eggNOG" id="arCOG04258">
    <property type="taxonomic scope" value="Archaea"/>
</dbReference>
<dbReference type="HOGENOM" id="CLU_058320_4_0_2"/>
<dbReference type="OrthoDB" id="30537at2157"/>
<dbReference type="GO" id="GO:0005737">
    <property type="term" value="C:cytoplasm"/>
    <property type="evidence" value="ECO:0007669"/>
    <property type="project" value="UniProtKB-SubCell"/>
</dbReference>
<dbReference type="GO" id="GO:0000428">
    <property type="term" value="C:DNA-directed RNA polymerase complex"/>
    <property type="evidence" value="ECO:0007669"/>
    <property type="project" value="UniProtKB-KW"/>
</dbReference>
<dbReference type="GO" id="GO:0003677">
    <property type="term" value="F:DNA binding"/>
    <property type="evidence" value="ECO:0007669"/>
    <property type="project" value="InterPro"/>
</dbReference>
<dbReference type="GO" id="GO:0003899">
    <property type="term" value="F:DNA-directed RNA polymerase activity"/>
    <property type="evidence" value="ECO:0007669"/>
    <property type="project" value="UniProtKB-UniRule"/>
</dbReference>
<dbReference type="GO" id="GO:0006366">
    <property type="term" value="P:transcription by RNA polymerase II"/>
    <property type="evidence" value="ECO:0007669"/>
    <property type="project" value="TreeGrafter"/>
</dbReference>
<dbReference type="GO" id="GO:0006362">
    <property type="term" value="P:transcription elongation by RNA polymerase I"/>
    <property type="evidence" value="ECO:0007669"/>
    <property type="project" value="TreeGrafter"/>
</dbReference>
<dbReference type="GO" id="GO:0042797">
    <property type="term" value="P:tRNA transcription by RNA polymerase III"/>
    <property type="evidence" value="ECO:0007669"/>
    <property type="project" value="TreeGrafter"/>
</dbReference>
<dbReference type="Gene3D" id="3.90.940.20">
    <property type="entry name" value="RPB5-like RNA polymerase subunit"/>
    <property type="match status" value="1"/>
</dbReference>
<dbReference type="HAMAP" id="MF_00025">
    <property type="entry name" value="RNApol_Rpo5_RPB5"/>
    <property type="match status" value="1"/>
</dbReference>
<dbReference type="InterPro" id="IPR014381">
    <property type="entry name" value="Arch_Rpo5/euc_Rpb5"/>
</dbReference>
<dbReference type="InterPro" id="IPR000783">
    <property type="entry name" value="RNA_pol_subH/Rpb5_C"/>
</dbReference>
<dbReference type="InterPro" id="IPR020608">
    <property type="entry name" value="RNA_pol_subH/Rpb5_CS"/>
</dbReference>
<dbReference type="InterPro" id="IPR035913">
    <property type="entry name" value="RPB5-like_sf"/>
</dbReference>
<dbReference type="NCBIfam" id="NF007129">
    <property type="entry name" value="PRK09570.1"/>
    <property type="match status" value="1"/>
</dbReference>
<dbReference type="PANTHER" id="PTHR10535">
    <property type="entry name" value="DNA-DIRECTED RNA POLYMERASES I, II, AND III SUBUNIT RPABC1"/>
    <property type="match status" value="1"/>
</dbReference>
<dbReference type="PANTHER" id="PTHR10535:SF0">
    <property type="entry name" value="DNA-DIRECTED RNA POLYMERASES I, II, AND III SUBUNIT RPABC1"/>
    <property type="match status" value="1"/>
</dbReference>
<dbReference type="Pfam" id="PF01191">
    <property type="entry name" value="RNA_pol_Rpb5_C"/>
    <property type="match status" value="1"/>
</dbReference>
<dbReference type="SUPFAM" id="SSF55287">
    <property type="entry name" value="RPB5-like RNA polymerase subunit"/>
    <property type="match status" value="1"/>
</dbReference>
<dbReference type="PROSITE" id="PS01110">
    <property type="entry name" value="RNA_POL_H_23KD"/>
    <property type="match status" value="1"/>
</dbReference>
<organism>
    <name type="scientific">Methanosarcina barkeri (strain Fusaro / DSM 804)</name>
    <dbReference type="NCBI Taxonomy" id="269797"/>
    <lineage>
        <taxon>Archaea</taxon>
        <taxon>Methanobacteriati</taxon>
        <taxon>Methanobacteriota</taxon>
        <taxon>Stenosarchaea group</taxon>
        <taxon>Methanomicrobia</taxon>
        <taxon>Methanosarcinales</taxon>
        <taxon>Methanosarcinaceae</taxon>
        <taxon>Methanosarcina</taxon>
    </lineage>
</organism>
<comment type="function">
    <text evidence="1">DNA-dependent RNA polymerase (RNAP) catalyzes the transcription of DNA into RNA using the four ribonucleoside triphosphates as substrates.</text>
</comment>
<comment type="catalytic activity">
    <reaction evidence="1">
        <text>RNA(n) + a ribonucleoside 5'-triphosphate = RNA(n+1) + diphosphate</text>
        <dbReference type="Rhea" id="RHEA:21248"/>
        <dbReference type="Rhea" id="RHEA-COMP:14527"/>
        <dbReference type="Rhea" id="RHEA-COMP:17342"/>
        <dbReference type="ChEBI" id="CHEBI:33019"/>
        <dbReference type="ChEBI" id="CHEBI:61557"/>
        <dbReference type="ChEBI" id="CHEBI:140395"/>
        <dbReference type="EC" id="2.7.7.6"/>
    </reaction>
</comment>
<comment type="subunit">
    <text evidence="1">Part of the RNA polymerase complex.</text>
</comment>
<comment type="subcellular location">
    <subcellularLocation>
        <location evidence="1">Cytoplasm</location>
    </subcellularLocation>
</comment>
<comment type="similarity">
    <text evidence="1">Belongs to the archaeal Rpo5/eukaryotic RPB5 RNA polymerase subunit family.</text>
</comment>
<accession>Q464Y4</accession>